<accession>Q9D7U6</accession>
<sequence>MGLVFRTATQAAALLLSLLGWVLSCLTNYLPHWKNLNLELNEMENWTMGLWKSCVIQEEVGRQCKDFDSFLALPAELQVSRVLMSLCNGLGLLGLLASGCGLDCLRLGETQEGLKKRLLTLGGTLLWTSGVMVLVPVSWVAHKTVREFWDETMPEIVPRWEFGEALFLGWFAGFCLVLGGCVLHCAACWSPAPAASSHYAVAGPRDHQQHLELKQANPEI</sequence>
<keyword id="KW-0965">Cell junction</keyword>
<keyword id="KW-1003">Cell membrane</keyword>
<keyword id="KW-0472">Membrane</keyword>
<keyword id="KW-1185">Reference proteome</keyword>
<keyword id="KW-0796">Tight junction</keyword>
<keyword id="KW-0812">Transmembrane</keyword>
<keyword id="KW-1133">Transmembrane helix</keyword>
<name>CLD22_MOUSE</name>
<organism>
    <name type="scientific">Mus musculus</name>
    <name type="common">Mouse</name>
    <dbReference type="NCBI Taxonomy" id="10090"/>
    <lineage>
        <taxon>Eukaryota</taxon>
        <taxon>Metazoa</taxon>
        <taxon>Chordata</taxon>
        <taxon>Craniata</taxon>
        <taxon>Vertebrata</taxon>
        <taxon>Euteleostomi</taxon>
        <taxon>Mammalia</taxon>
        <taxon>Eutheria</taxon>
        <taxon>Euarchontoglires</taxon>
        <taxon>Glires</taxon>
        <taxon>Rodentia</taxon>
        <taxon>Myomorpha</taxon>
        <taxon>Muroidea</taxon>
        <taxon>Muridae</taxon>
        <taxon>Murinae</taxon>
        <taxon>Mus</taxon>
        <taxon>Mus</taxon>
    </lineage>
</organism>
<reference key="1">
    <citation type="journal article" date="2005" name="Science">
        <title>The transcriptional landscape of the mammalian genome.</title>
        <authorList>
            <person name="Carninci P."/>
            <person name="Kasukawa T."/>
            <person name="Katayama S."/>
            <person name="Gough J."/>
            <person name="Frith M.C."/>
            <person name="Maeda N."/>
            <person name="Oyama R."/>
            <person name="Ravasi T."/>
            <person name="Lenhard B."/>
            <person name="Wells C."/>
            <person name="Kodzius R."/>
            <person name="Shimokawa K."/>
            <person name="Bajic V.B."/>
            <person name="Brenner S.E."/>
            <person name="Batalov S."/>
            <person name="Forrest A.R."/>
            <person name="Zavolan M."/>
            <person name="Davis M.J."/>
            <person name="Wilming L.G."/>
            <person name="Aidinis V."/>
            <person name="Allen J.E."/>
            <person name="Ambesi-Impiombato A."/>
            <person name="Apweiler R."/>
            <person name="Aturaliya R.N."/>
            <person name="Bailey T.L."/>
            <person name="Bansal M."/>
            <person name="Baxter L."/>
            <person name="Beisel K.W."/>
            <person name="Bersano T."/>
            <person name="Bono H."/>
            <person name="Chalk A.M."/>
            <person name="Chiu K.P."/>
            <person name="Choudhary V."/>
            <person name="Christoffels A."/>
            <person name="Clutterbuck D.R."/>
            <person name="Crowe M.L."/>
            <person name="Dalla E."/>
            <person name="Dalrymple B.P."/>
            <person name="de Bono B."/>
            <person name="Della Gatta G."/>
            <person name="di Bernardo D."/>
            <person name="Down T."/>
            <person name="Engstrom P."/>
            <person name="Fagiolini M."/>
            <person name="Faulkner G."/>
            <person name="Fletcher C.F."/>
            <person name="Fukushima T."/>
            <person name="Furuno M."/>
            <person name="Futaki S."/>
            <person name="Gariboldi M."/>
            <person name="Georgii-Hemming P."/>
            <person name="Gingeras T.R."/>
            <person name="Gojobori T."/>
            <person name="Green R.E."/>
            <person name="Gustincich S."/>
            <person name="Harbers M."/>
            <person name="Hayashi Y."/>
            <person name="Hensch T.K."/>
            <person name="Hirokawa N."/>
            <person name="Hill D."/>
            <person name="Huminiecki L."/>
            <person name="Iacono M."/>
            <person name="Ikeo K."/>
            <person name="Iwama A."/>
            <person name="Ishikawa T."/>
            <person name="Jakt M."/>
            <person name="Kanapin A."/>
            <person name="Katoh M."/>
            <person name="Kawasawa Y."/>
            <person name="Kelso J."/>
            <person name="Kitamura H."/>
            <person name="Kitano H."/>
            <person name="Kollias G."/>
            <person name="Krishnan S.P."/>
            <person name="Kruger A."/>
            <person name="Kummerfeld S.K."/>
            <person name="Kurochkin I.V."/>
            <person name="Lareau L.F."/>
            <person name="Lazarevic D."/>
            <person name="Lipovich L."/>
            <person name="Liu J."/>
            <person name="Liuni S."/>
            <person name="McWilliam S."/>
            <person name="Madan Babu M."/>
            <person name="Madera M."/>
            <person name="Marchionni L."/>
            <person name="Matsuda H."/>
            <person name="Matsuzawa S."/>
            <person name="Miki H."/>
            <person name="Mignone F."/>
            <person name="Miyake S."/>
            <person name="Morris K."/>
            <person name="Mottagui-Tabar S."/>
            <person name="Mulder N."/>
            <person name="Nakano N."/>
            <person name="Nakauchi H."/>
            <person name="Ng P."/>
            <person name="Nilsson R."/>
            <person name="Nishiguchi S."/>
            <person name="Nishikawa S."/>
            <person name="Nori F."/>
            <person name="Ohara O."/>
            <person name="Okazaki Y."/>
            <person name="Orlando V."/>
            <person name="Pang K.C."/>
            <person name="Pavan W.J."/>
            <person name="Pavesi G."/>
            <person name="Pesole G."/>
            <person name="Petrovsky N."/>
            <person name="Piazza S."/>
            <person name="Reed J."/>
            <person name="Reid J.F."/>
            <person name="Ring B.Z."/>
            <person name="Ringwald M."/>
            <person name="Rost B."/>
            <person name="Ruan Y."/>
            <person name="Salzberg S.L."/>
            <person name="Sandelin A."/>
            <person name="Schneider C."/>
            <person name="Schoenbach C."/>
            <person name="Sekiguchi K."/>
            <person name="Semple C.A."/>
            <person name="Seno S."/>
            <person name="Sessa L."/>
            <person name="Sheng Y."/>
            <person name="Shibata Y."/>
            <person name="Shimada H."/>
            <person name="Shimada K."/>
            <person name="Silva D."/>
            <person name="Sinclair B."/>
            <person name="Sperling S."/>
            <person name="Stupka E."/>
            <person name="Sugiura K."/>
            <person name="Sultana R."/>
            <person name="Takenaka Y."/>
            <person name="Taki K."/>
            <person name="Tammoja K."/>
            <person name="Tan S.L."/>
            <person name="Tang S."/>
            <person name="Taylor M.S."/>
            <person name="Tegner J."/>
            <person name="Teichmann S.A."/>
            <person name="Ueda H.R."/>
            <person name="van Nimwegen E."/>
            <person name="Verardo R."/>
            <person name="Wei C.L."/>
            <person name="Yagi K."/>
            <person name="Yamanishi H."/>
            <person name="Zabarovsky E."/>
            <person name="Zhu S."/>
            <person name="Zimmer A."/>
            <person name="Hide W."/>
            <person name="Bult C."/>
            <person name="Grimmond S.M."/>
            <person name="Teasdale R.D."/>
            <person name="Liu E.T."/>
            <person name="Brusic V."/>
            <person name="Quackenbush J."/>
            <person name="Wahlestedt C."/>
            <person name="Mattick J.S."/>
            <person name="Hume D.A."/>
            <person name="Kai C."/>
            <person name="Sasaki D."/>
            <person name="Tomaru Y."/>
            <person name="Fukuda S."/>
            <person name="Kanamori-Katayama M."/>
            <person name="Suzuki M."/>
            <person name="Aoki J."/>
            <person name="Arakawa T."/>
            <person name="Iida J."/>
            <person name="Imamura K."/>
            <person name="Itoh M."/>
            <person name="Kato T."/>
            <person name="Kawaji H."/>
            <person name="Kawagashira N."/>
            <person name="Kawashima T."/>
            <person name="Kojima M."/>
            <person name="Kondo S."/>
            <person name="Konno H."/>
            <person name="Nakano K."/>
            <person name="Ninomiya N."/>
            <person name="Nishio T."/>
            <person name="Okada M."/>
            <person name="Plessy C."/>
            <person name="Shibata K."/>
            <person name="Shiraki T."/>
            <person name="Suzuki S."/>
            <person name="Tagami M."/>
            <person name="Waki K."/>
            <person name="Watahiki A."/>
            <person name="Okamura-Oho Y."/>
            <person name="Suzuki H."/>
            <person name="Kawai J."/>
            <person name="Hayashizaki Y."/>
        </authorList>
    </citation>
    <scope>NUCLEOTIDE SEQUENCE [LARGE SCALE MRNA]</scope>
    <source>
        <strain>C57BL/6J</strain>
        <tissue>Stomach</tissue>
    </source>
</reference>
<comment type="function">
    <text evidence="1">Plays a major role in tight junction-specific obliteration of the intercellular space, through calcium-independent cell-adhesion activity.</text>
</comment>
<comment type="subcellular location">
    <subcellularLocation>
        <location evidence="1">Cell junction</location>
        <location evidence="1">Tight junction</location>
    </subcellularLocation>
    <subcellularLocation>
        <location evidence="1">Cell membrane</location>
        <topology evidence="1">Multi-pass membrane protein</topology>
    </subcellularLocation>
</comment>
<comment type="similarity">
    <text evidence="3">Belongs to the claudin family.</text>
</comment>
<protein>
    <recommendedName>
        <fullName>Claudin-22</fullName>
    </recommendedName>
</protein>
<evidence type="ECO:0000250" key="1"/>
<evidence type="ECO:0000255" key="2"/>
<evidence type="ECO:0000305" key="3"/>
<feature type="chain" id="PRO_0000144786" description="Claudin-22">
    <location>
        <begin position="1"/>
        <end position="220"/>
    </location>
</feature>
<feature type="topological domain" description="Cytoplasmic" evidence="2">
    <location>
        <begin position="1"/>
        <end position="10"/>
    </location>
</feature>
<feature type="transmembrane region" description="Helical" evidence="2">
    <location>
        <begin position="11"/>
        <end position="31"/>
    </location>
</feature>
<feature type="topological domain" description="Extracellular" evidence="2">
    <location>
        <begin position="32"/>
        <end position="81"/>
    </location>
</feature>
<feature type="transmembrane region" description="Helical" evidence="2">
    <location>
        <begin position="82"/>
        <end position="102"/>
    </location>
</feature>
<feature type="topological domain" description="Cytoplasmic" evidence="2">
    <location>
        <begin position="103"/>
        <end position="120"/>
    </location>
</feature>
<feature type="transmembrane region" description="Helical" evidence="2">
    <location>
        <begin position="121"/>
        <end position="141"/>
    </location>
</feature>
<feature type="topological domain" description="Extracellular" evidence="2">
    <location>
        <begin position="142"/>
        <end position="164"/>
    </location>
</feature>
<feature type="transmembrane region" description="Helical" evidence="2">
    <location>
        <begin position="165"/>
        <end position="185"/>
    </location>
</feature>
<feature type="topological domain" description="Cytoplasmic" evidence="2">
    <location>
        <begin position="186"/>
        <end position="220"/>
    </location>
</feature>
<gene>
    <name type="primary">Cldn22</name>
</gene>
<dbReference type="EMBL" id="AK008821">
    <property type="protein sequence ID" value="BAB25914.1"/>
    <property type="molecule type" value="mRNA"/>
</dbReference>
<dbReference type="CCDS" id="CCDS52550.1"/>
<dbReference type="RefSeq" id="NP_083659.1">
    <property type="nucleotide sequence ID" value="NM_029383.2"/>
</dbReference>
<dbReference type="SMR" id="Q9D7U6"/>
<dbReference type="FunCoup" id="Q9D7U6">
    <property type="interactions" value="324"/>
</dbReference>
<dbReference type="STRING" id="10090.ENSMUSP00000041676"/>
<dbReference type="PaxDb" id="10090-ENSMUSP00000041676"/>
<dbReference type="ProteomicsDB" id="283292"/>
<dbReference type="DNASU" id="75677"/>
<dbReference type="Ensembl" id="ENSMUST00000038693.8">
    <property type="protein sequence ID" value="ENSMUSP00000041676.7"/>
    <property type="gene ID" value="ENSMUSG00000038064.8"/>
</dbReference>
<dbReference type="GeneID" id="75677"/>
<dbReference type="KEGG" id="mmu:75677"/>
<dbReference type="UCSC" id="uc012gdq.1">
    <property type="organism name" value="mouse"/>
</dbReference>
<dbReference type="AGR" id="MGI:1922927"/>
<dbReference type="CTD" id="53842"/>
<dbReference type="MGI" id="MGI:1922927">
    <property type="gene designation" value="Cldn22"/>
</dbReference>
<dbReference type="VEuPathDB" id="HostDB:ENSMUSG00000038064"/>
<dbReference type="eggNOG" id="ENOG502RSH3">
    <property type="taxonomic scope" value="Eukaryota"/>
</dbReference>
<dbReference type="GeneTree" id="ENSGT00940000161922"/>
<dbReference type="HOGENOM" id="CLU_076370_1_2_1"/>
<dbReference type="InParanoid" id="Q9D7U6"/>
<dbReference type="OMA" id="WDEGFPD"/>
<dbReference type="OrthoDB" id="8612291at2759"/>
<dbReference type="PhylomeDB" id="Q9D7U6"/>
<dbReference type="TreeFam" id="TF331936"/>
<dbReference type="BioGRID-ORCS" id="75677">
    <property type="hits" value="4 hits in 75 CRISPR screens"/>
</dbReference>
<dbReference type="PRO" id="PR:Q9D7U6"/>
<dbReference type="Proteomes" id="UP000000589">
    <property type="component" value="Chromosome 8"/>
</dbReference>
<dbReference type="RNAct" id="Q9D7U6">
    <property type="molecule type" value="protein"/>
</dbReference>
<dbReference type="Bgee" id="ENSMUSG00000038064">
    <property type="expression patterns" value="Expressed in parotid gland and 59 other cell types or tissues"/>
</dbReference>
<dbReference type="GO" id="GO:0005923">
    <property type="term" value="C:bicellular tight junction"/>
    <property type="evidence" value="ECO:0000250"/>
    <property type="project" value="UniProtKB"/>
</dbReference>
<dbReference type="GO" id="GO:0005886">
    <property type="term" value="C:plasma membrane"/>
    <property type="evidence" value="ECO:0007669"/>
    <property type="project" value="UniProtKB-SubCell"/>
</dbReference>
<dbReference type="GO" id="GO:0042802">
    <property type="term" value="F:identical protein binding"/>
    <property type="evidence" value="ECO:0000250"/>
    <property type="project" value="UniProtKB"/>
</dbReference>
<dbReference type="GO" id="GO:0005198">
    <property type="term" value="F:structural molecule activity"/>
    <property type="evidence" value="ECO:0007669"/>
    <property type="project" value="InterPro"/>
</dbReference>
<dbReference type="GO" id="GO:0016338">
    <property type="term" value="P:calcium-independent cell-cell adhesion via plasma membrane cell-adhesion molecules"/>
    <property type="evidence" value="ECO:0000250"/>
    <property type="project" value="UniProtKB"/>
</dbReference>
<dbReference type="FunFam" id="1.20.140.150:FF:000001">
    <property type="entry name" value="Claudin"/>
    <property type="match status" value="1"/>
</dbReference>
<dbReference type="Gene3D" id="1.20.140.150">
    <property type="match status" value="1"/>
</dbReference>
<dbReference type="InterPro" id="IPR006187">
    <property type="entry name" value="Claudin"/>
</dbReference>
<dbReference type="InterPro" id="IPR017974">
    <property type="entry name" value="Claudin_CS"/>
</dbReference>
<dbReference type="InterPro" id="IPR004031">
    <property type="entry name" value="PMP22/EMP/MP20/Claudin"/>
</dbReference>
<dbReference type="PANTHER" id="PTHR12002">
    <property type="entry name" value="CLAUDIN"/>
    <property type="match status" value="1"/>
</dbReference>
<dbReference type="Pfam" id="PF00822">
    <property type="entry name" value="PMP22_Claudin"/>
    <property type="match status" value="1"/>
</dbReference>
<dbReference type="PRINTS" id="PR01077">
    <property type="entry name" value="CLAUDIN"/>
</dbReference>
<dbReference type="PROSITE" id="PS01346">
    <property type="entry name" value="CLAUDIN"/>
    <property type="match status" value="1"/>
</dbReference>
<proteinExistence type="evidence at transcript level"/>